<reference key="1">
    <citation type="journal article" date="2008" name="BMC Plant Biol.">
        <title>Comparative chloroplast genomics and phylogenetics of Fagopyrum esculentum ssp. ancestrale - a wild ancestor of cultivated buckwheat.</title>
        <authorList>
            <person name="Logacheva M.D."/>
            <person name="Samigullin T.H."/>
            <person name="Dhingra A."/>
            <person name="Penin A.A."/>
        </authorList>
    </citation>
    <scope>NUCLEOTIDE SEQUENCE [LARGE SCALE GENOMIC DNA]</scope>
</reference>
<gene>
    <name evidence="1" type="primary">petN</name>
</gene>
<sequence length="29" mass="3170">MDIVSLAWAALMVVFTFSLSLVVWGRSGL</sequence>
<dbReference type="EMBL" id="EU254477">
    <property type="protein sequence ID" value="ABY79725.1"/>
    <property type="molecule type" value="Genomic_DNA"/>
</dbReference>
<dbReference type="RefSeq" id="YP_001936510.1">
    <property type="nucleotide sequence ID" value="NC_010776.1"/>
</dbReference>
<dbReference type="SMR" id="B2XWP2"/>
<dbReference type="GeneID" id="6336052"/>
<dbReference type="GO" id="GO:0009535">
    <property type="term" value="C:chloroplast thylakoid membrane"/>
    <property type="evidence" value="ECO:0007669"/>
    <property type="project" value="UniProtKB-SubCell"/>
</dbReference>
<dbReference type="GO" id="GO:0009512">
    <property type="term" value="C:cytochrome b6f complex"/>
    <property type="evidence" value="ECO:0007669"/>
    <property type="project" value="InterPro"/>
</dbReference>
<dbReference type="GO" id="GO:0045158">
    <property type="term" value="F:electron transporter, transferring electrons within cytochrome b6/f complex of photosystem II activity"/>
    <property type="evidence" value="ECO:0007669"/>
    <property type="project" value="InterPro"/>
</dbReference>
<dbReference type="GO" id="GO:0017004">
    <property type="term" value="P:cytochrome complex assembly"/>
    <property type="evidence" value="ECO:0007669"/>
    <property type="project" value="UniProtKB-UniRule"/>
</dbReference>
<dbReference type="GO" id="GO:0015979">
    <property type="term" value="P:photosynthesis"/>
    <property type="evidence" value="ECO:0007669"/>
    <property type="project" value="UniProtKB-KW"/>
</dbReference>
<dbReference type="HAMAP" id="MF_00395">
    <property type="entry name" value="Cytb6_f_PetN"/>
    <property type="match status" value="1"/>
</dbReference>
<dbReference type="InterPro" id="IPR036143">
    <property type="entry name" value="Cytochr_b6-f_cplx_su8_sf"/>
</dbReference>
<dbReference type="InterPro" id="IPR005497">
    <property type="entry name" value="Cytochrome_b6-f_cplx_su8"/>
</dbReference>
<dbReference type="Pfam" id="PF03742">
    <property type="entry name" value="PetN"/>
    <property type="match status" value="1"/>
</dbReference>
<dbReference type="SUPFAM" id="SSF103451">
    <property type="entry name" value="PetN subunit of the cytochrome b6f complex"/>
    <property type="match status" value="1"/>
</dbReference>
<keyword id="KW-0150">Chloroplast</keyword>
<keyword id="KW-0249">Electron transport</keyword>
<keyword id="KW-0472">Membrane</keyword>
<keyword id="KW-0602">Photosynthesis</keyword>
<keyword id="KW-0934">Plastid</keyword>
<keyword id="KW-0793">Thylakoid</keyword>
<keyword id="KW-0812">Transmembrane</keyword>
<keyword id="KW-1133">Transmembrane helix</keyword>
<keyword id="KW-0813">Transport</keyword>
<organism>
    <name type="scientific">Fagopyrum esculentum subsp. ancestrale</name>
    <name type="common">Wild buckwheat</name>
    <dbReference type="NCBI Taxonomy" id="180217"/>
    <lineage>
        <taxon>Eukaryota</taxon>
        <taxon>Viridiplantae</taxon>
        <taxon>Streptophyta</taxon>
        <taxon>Embryophyta</taxon>
        <taxon>Tracheophyta</taxon>
        <taxon>Spermatophyta</taxon>
        <taxon>Magnoliopsida</taxon>
        <taxon>eudicotyledons</taxon>
        <taxon>Gunneridae</taxon>
        <taxon>Pentapetalae</taxon>
        <taxon>Caryophyllales</taxon>
        <taxon>Polygonaceae</taxon>
        <taxon>Polygonoideae</taxon>
        <taxon>Fagopyreae</taxon>
        <taxon>Fagopyrum</taxon>
    </lineage>
</organism>
<evidence type="ECO:0000255" key="1">
    <source>
        <dbReference type="HAMAP-Rule" id="MF_00395"/>
    </source>
</evidence>
<comment type="function">
    <text evidence="1">Component of the cytochrome b6-f complex, which mediates electron transfer between photosystem II (PSII) and photosystem I (PSI), cyclic electron flow around PSI, and state transitions.</text>
</comment>
<comment type="subunit">
    <text evidence="1">The 4 large subunits of the cytochrome b6-f complex are cytochrome b6, subunit IV (17 kDa polypeptide, PetD), cytochrome f and the Rieske protein, while the 4 small subunits are PetG, PetL, PetM and PetN. The complex functions as a dimer.</text>
</comment>
<comment type="subcellular location">
    <subcellularLocation>
        <location evidence="1">Plastid</location>
        <location evidence="1">Chloroplast thylakoid membrane</location>
        <topology evidence="1">Single-pass membrane protein</topology>
    </subcellularLocation>
</comment>
<comment type="similarity">
    <text evidence="1">Belongs to the PetN family.</text>
</comment>
<geneLocation type="chloroplast"/>
<name>PETN_FAGEA</name>
<feature type="chain" id="PRO_0000355439" description="Cytochrome b6-f complex subunit 8">
    <location>
        <begin position="1"/>
        <end position="29"/>
    </location>
</feature>
<feature type="transmembrane region" description="Helical" evidence="1">
    <location>
        <begin position="3"/>
        <end position="23"/>
    </location>
</feature>
<proteinExistence type="inferred from homology"/>
<protein>
    <recommendedName>
        <fullName evidence="1">Cytochrome b6-f complex subunit 8</fullName>
    </recommendedName>
    <alternativeName>
        <fullName evidence="1">Cytochrome b6-f complex subunit PetN</fullName>
    </alternativeName>
    <alternativeName>
        <fullName evidence="1">Cytochrome b6-f complex subunit VIII</fullName>
    </alternativeName>
</protein>
<accession>B2XWP2</accession>